<proteinExistence type="inferred from homology"/>
<dbReference type="EMBL" id="CU928160">
    <property type="protein sequence ID" value="CAQ97050.1"/>
    <property type="molecule type" value="Genomic_DNA"/>
</dbReference>
<dbReference type="RefSeq" id="WP_000272188.1">
    <property type="nucleotide sequence ID" value="NC_011741.1"/>
</dbReference>
<dbReference type="SMR" id="B7M1A4"/>
<dbReference type="KEGG" id="ecr:ECIAI1_0162"/>
<dbReference type="HOGENOM" id="CLU_136774_0_0_6"/>
<dbReference type="HAMAP" id="MF_01519">
    <property type="entry name" value="UPF0325"/>
    <property type="match status" value="1"/>
</dbReference>
<dbReference type="InterPro" id="IPR020911">
    <property type="entry name" value="UPF0325"/>
</dbReference>
<dbReference type="NCBIfam" id="NF010213">
    <property type="entry name" value="PRK13677.1"/>
    <property type="match status" value="1"/>
</dbReference>
<dbReference type="Pfam" id="PF11944">
    <property type="entry name" value="DUF3461"/>
    <property type="match status" value="1"/>
</dbReference>
<name>YAEH_ECO8A</name>
<feature type="chain" id="PRO_1000198431" description="UPF0325 protein YaeH">
    <location>
        <begin position="1"/>
        <end position="128"/>
    </location>
</feature>
<accession>B7M1A4</accession>
<gene>
    <name evidence="1" type="primary">yaeH</name>
    <name type="ordered locus">ECIAI1_0162</name>
</gene>
<protein>
    <recommendedName>
        <fullName evidence="1">UPF0325 protein YaeH</fullName>
    </recommendedName>
</protein>
<reference key="1">
    <citation type="journal article" date="2009" name="PLoS Genet.">
        <title>Organised genome dynamics in the Escherichia coli species results in highly diverse adaptive paths.</title>
        <authorList>
            <person name="Touchon M."/>
            <person name="Hoede C."/>
            <person name="Tenaillon O."/>
            <person name="Barbe V."/>
            <person name="Baeriswyl S."/>
            <person name="Bidet P."/>
            <person name="Bingen E."/>
            <person name="Bonacorsi S."/>
            <person name="Bouchier C."/>
            <person name="Bouvet O."/>
            <person name="Calteau A."/>
            <person name="Chiapello H."/>
            <person name="Clermont O."/>
            <person name="Cruveiller S."/>
            <person name="Danchin A."/>
            <person name="Diard M."/>
            <person name="Dossat C."/>
            <person name="Karoui M.E."/>
            <person name="Frapy E."/>
            <person name="Garry L."/>
            <person name="Ghigo J.M."/>
            <person name="Gilles A.M."/>
            <person name="Johnson J."/>
            <person name="Le Bouguenec C."/>
            <person name="Lescat M."/>
            <person name="Mangenot S."/>
            <person name="Martinez-Jehanne V."/>
            <person name="Matic I."/>
            <person name="Nassif X."/>
            <person name="Oztas S."/>
            <person name="Petit M.A."/>
            <person name="Pichon C."/>
            <person name="Rouy Z."/>
            <person name="Ruf C.S."/>
            <person name="Schneider D."/>
            <person name="Tourret J."/>
            <person name="Vacherie B."/>
            <person name="Vallenet D."/>
            <person name="Medigue C."/>
            <person name="Rocha E.P.C."/>
            <person name="Denamur E."/>
        </authorList>
    </citation>
    <scope>NUCLEOTIDE SEQUENCE [LARGE SCALE GENOMIC DNA]</scope>
    <source>
        <strain>IAI1</strain>
    </source>
</reference>
<evidence type="ECO:0000255" key="1">
    <source>
        <dbReference type="HAMAP-Rule" id="MF_01519"/>
    </source>
</evidence>
<comment type="similarity">
    <text evidence="1">Belongs to the UPF0325 family.</text>
</comment>
<sequence>MYDNLKSLGITNPEEIDRYSLRQEANNDILKIYFQKDKGEFFAKSVKFKYPRQRKTVVADGVGQGYKEVQEISPNLRYIIDELDQICQRDRSEVDLKRKILDDLRHLESVVTNKISEIEADLEKLTRK</sequence>
<organism>
    <name type="scientific">Escherichia coli O8 (strain IAI1)</name>
    <dbReference type="NCBI Taxonomy" id="585034"/>
    <lineage>
        <taxon>Bacteria</taxon>
        <taxon>Pseudomonadati</taxon>
        <taxon>Pseudomonadota</taxon>
        <taxon>Gammaproteobacteria</taxon>
        <taxon>Enterobacterales</taxon>
        <taxon>Enterobacteriaceae</taxon>
        <taxon>Escherichia</taxon>
    </lineage>
</organism>